<organism>
    <name type="scientific">Ralstonia nicotianae (strain ATCC BAA-1114 / GMI1000)</name>
    <name type="common">Ralstonia solanacearum</name>
    <dbReference type="NCBI Taxonomy" id="267608"/>
    <lineage>
        <taxon>Bacteria</taxon>
        <taxon>Pseudomonadati</taxon>
        <taxon>Pseudomonadota</taxon>
        <taxon>Betaproteobacteria</taxon>
        <taxon>Burkholderiales</taxon>
        <taxon>Burkholderiaceae</taxon>
        <taxon>Ralstonia</taxon>
        <taxon>Ralstonia solanacearum species complex</taxon>
    </lineage>
</organism>
<feature type="chain" id="PRO_0000272816" description="Large ribosomal subunit protein uL23">
    <location>
        <begin position="1"/>
        <end position="104"/>
    </location>
</feature>
<name>RL23_RALN1</name>
<protein>
    <recommendedName>
        <fullName evidence="1">Large ribosomal subunit protein uL23</fullName>
    </recommendedName>
    <alternativeName>
        <fullName evidence="2">50S ribosomal protein L23</fullName>
    </alternativeName>
</protein>
<dbReference type="EMBL" id="AL646052">
    <property type="protein sequence ID" value="CAD16726.1"/>
    <property type="molecule type" value="Genomic_DNA"/>
</dbReference>
<dbReference type="RefSeq" id="WP_003264114.1">
    <property type="nucleotide sequence ID" value="NC_003295.1"/>
</dbReference>
<dbReference type="SMR" id="Q8XV14"/>
<dbReference type="STRING" id="267608.RSc3017"/>
<dbReference type="EnsemblBacteria" id="CAD16726">
    <property type="protein sequence ID" value="CAD16726"/>
    <property type="gene ID" value="RSc3017"/>
</dbReference>
<dbReference type="KEGG" id="rso:RSc3017"/>
<dbReference type="eggNOG" id="COG0089">
    <property type="taxonomic scope" value="Bacteria"/>
</dbReference>
<dbReference type="HOGENOM" id="CLU_037562_3_1_4"/>
<dbReference type="Proteomes" id="UP000001436">
    <property type="component" value="Chromosome"/>
</dbReference>
<dbReference type="GO" id="GO:1990904">
    <property type="term" value="C:ribonucleoprotein complex"/>
    <property type="evidence" value="ECO:0007669"/>
    <property type="project" value="UniProtKB-KW"/>
</dbReference>
<dbReference type="GO" id="GO:0005840">
    <property type="term" value="C:ribosome"/>
    <property type="evidence" value="ECO:0007669"/>
    <property type="project" value="UniProtKB-KW"/>
</dbReference>
<dbReference type="GO" id="GO:0019843">
    <property type="term" value="F:rRNA binding"/>
    <property type="evidence" value="ECO:0007669"/>
    <property type="project" value="UniProtKB-UniRule"/>
</dbReference>
<dbReference type="GO" id="GO:0003735">
    <property type="term" value="F:structural constituent of ribosome"/>
    <property type="evidence" value="ECO:0007669"/>
    <property type="project" value="InterPro"/>
</dbReference>
<dbReference type="GO" id="GO:0006412">
    <property type="term" value="P:translation"/>
    <property type="evidence" value="ECO:0007669"/>
    <property type="project" value="UniProtKB-UniRule"/>
</dbReference>
<dbReference type="FunFam" id="3.30.70.330:FF:000001">
    <property type="entry name" value="50S ribosomal protein L23"/>
    <property type="match status" value="1"/>
</dbReference>
<dbReference type="Gene3D" id="3.30.70.330">
    <property type="match status" value="1"/>
</dbReference>
<dbReference type="HAMAP" id="MF_01369_B">
    <property type="entry name" value="Ribosomal_uL23_B"/>
    <property type="match status" value="1"/>
</dbReference>
<dbReference type="InterPro" id="IPR012677">
    <property type="entry name" value="Nucleotide-bd_a/b_plait_sf"/>
</dbReference>
<dbReference type="InterPro" id="IPR013025">
    <property type="entry name" value="Ribosomal_uL23-like"/>
</dbReference>
<dbReference type="InterPro" id="IPR012678">
    <property type="entry name" value="Ribosomal_uL23/eL15/eS24_sf"/>
</dbReference>
<dbReference type="NCBIfam" id="NF004359">
    <property type="entry name" value="PRK05738.1-3"/>
    <property type="match status" value="1"/>
</dbReference>
<dbReference type="NCBIfam" id="NF004363">
    <property type="entry name" value="PRK05738.2-4"/>
    <property type="match status" value="1"/>
</dbReference>
<dbReference type="PANTHER" id="PTHR11620">
    <property type="entry name" value="60S RIBOSOMAL PROTEIN L23A"/>
    <property type="match status" value="1"/>
</dbReference>
<dbReference type="Pfam" id="PF00276">
    <property type="entry name" value="Ribosomal_L23"/>
    <property type="match status" value="1"/>
</dbReference>
<dbReference type="SUPFAM" id="SSF54189">
    <property type="entry name" value="Ribosomal proteins S24e, L23 and L15e"/>
    <property type="match status" value="1"/>
</dbReference>
<gene>
    <name evidence="1" type="primary">rplW</name>
    <name type="ordered locus">RSc3017</name>
</gene>
<reference key="1">
    <citation type="journal article" date="2002" name="Nature">
        <title>Genome sequence of the plant pathogen Ralstonia solanacearum.</title>
        <authorList>
            <person name="Salanoubat M."/>
            <person name="Genin S."/>
            <person name="Artiguenave F."/>
            <person name="Gouzy J."/>
            <person name="Mangenot S."/>
            <person name="Arlat M."/>
            <person name="Billault A."/>
            <person name="Brottier P."/>
            <person name="Camus J.-C."/>
            <person name="Cattolico L."/>
            <person name="Chandler M."/>
            <person name="Choisne N."/>
            <person name="Claudel-Renard C."/>
            <person name="Cunnac S."/>
            <person name="Demange N."/>
            <person name="Gaspin C."/>
            <person name="Lavie M."/>
            <person name="Moisan A."/>
            <person name="Robert C."/>
            <person name="Saurin W."/>
            <person name="Schiex T."/>
            <person name="Siguier P."/>
            <person name="Thebault P."/>
            <person name="Whalen M."/>
            <person name="Wincker P."/>
            <person name="Levy M."/>
            <person name="Weissenbach J."/>
            <person name="Boucher C.A."/>
        </authorList>
    </citation>
    <scope>NUCLEOTIDE SEQUENCE [LARGE SCALE GENOMIC DNA]</scope>
    <source>
        <strain>ATCC BAA-1114 / GMI1000</strain>
    </source>
</reference>
<proteinExistence type="inferred from homology"/>
<accession>Q8XV14</accession>
<sequence length="104" mass="11767">MTQVAKNDHRLMQVLLSPVVSEKATLVADKNEQVVFEVARDANKGEVKAAVELLFKVEVESVQILNQKGKQKRFGRFMGRRDHVKKAYVSLKPGQEINFEAEAK</sequence>
<comment type="function">
    <text evidence="1">One of the early assembly proteins it binds 23S rRNA. One of the proteins that surrounds the polypeptide exit tunnel on the outside of the ribosome. Forms the main docking site for trigger factor binding to the ribosome.</text>
</comment>
<comment type="subunit">
    <text evidence="1">Part of the 50S ribosomal subunit. Contacts protein L29, and trigger factor when it is bound to the ribosome.</text>
</comment>
<comment type="similarity">
    <text evidence="1">Belongs to the universal ribosomal protein uL23 family.</text>
</comment>
<keyword id="KW-1185">Reference proteome</keyword>
<keyword id="KW-0687">Ribonucleoprotein</keyword>
<keyword id="KW-0689">Ribosomal protein</keyword>
<keyword id="KW-0694">RNA-binding</keyword>
<keyword id="KW-0699">rRNA-binding</keyword>
<evidence type="ECO:0000255" key="1">
    <source>
        <dbReference type="HAMAP-Rule" id="MF_01369"/>
    </source>
</evidence>
<evidence type="ECO:0000305" key="2"/>